<protein>
    <recommendedName>
        <fullName evidence="1">Chorismate synthase</fullName>
        <shortName evidence="1">CS</shortName>
        <ecNumber evidence="1">4.2.3.5</ecNumber>
    </recommendedName>
    <alternativeName>
        <fullName evidence="1">5-enolpyruvylshikimate-3-phosphate phospholyase</fullName>
    </alternativeName>
</protein>
<comment type="function">
    <text evidence="1">Catalyzes the anti-1,4-elimination of the C-3 phosphate and the C-6 proR hydrogen from 5-enolpyruvylshikimate-3-phosphate (EPSP) to yield chorismate, which is the branch point compound that serves as the starting substrate for the three terminal pathways of aromatic amino acid biosynthesis. This reaction introduces a second double bond into the aromatic ring system.</text>
</comment>
<comment type="catalytic activity">
    <reaction evidence="1">
        <text>5-O-(1-carboxyvinyl)-3-phosphoshikimate = chorismate + phosphate</text>
        <dbReference type="Rhea" id="RHEA:21020"/>
        <dbReference type="ChEBI" id="CHEBI:29748"/>
        <dbReference type="ChEBI" id="CHEBI:43474"/>
        <dbReference type="ChEBI" id="CHEBI:57701"/>
        <dbReference type="EC" id="4.2.3.5"/>
    </reaction>
</comment>
<comment type="cofactor">
    <cofactor evidence="1">
        <name>FMNH2</name>
        <dbReference type="ChEBI" id="CHEBI:57618"/>
    </cofactor>
    <text evidence="1">Reduced FMN (FMNH(2)).</text>
</comment>
<comment type="pathway">
    <text evidence="1">Metabolic intermediate biosynthesis; chorismate biosynthesis; chorismate from D-erythrose 4-phosphate and phosphoenolpyruvate: step 7/7.</text>
</comment>
<comment type="subunit">
    <text evidence="1">Homotetramer.</text>
</comment>
<comment type="similarity">
    <text evidence="1">Belongs to the chorismate synthase family.</text>
</comment>
<gene>
    <name evidence="1" type="primary">aroC</name>
    <name type="ordered locus">lpg2303</name>
</gene>
<dbReference type="EC" id="4.2.3.5" evidence="1"/>
<dbReference type="EMBL" id="AE017354">
    <property type="protein sequence ID" value="AAU28365.1"/>
    <property type="molecule type" value="Genomic_DNA"/>
</dbReference>
<dbReference type="RefSeq" id="WP_010948009.1">
    <property type="nucleotide sequence ID" value="NC_002942.5"/>
</dbReference>
<dbReference type="RefSeq" id="YP_096312.1">
    <property type="nucleotide sequence ID" value="NC_002942.5"/>
</dbReference>
<dbReference type="SMR" id="Q5ZT62"/>
<dbReference type="STRING" id="272624.lpg2303"/>
<dbReference type="PaxDb" id="272624-lpg2303"/>
<dbReference type="GeneID" id="57036294"/>
<dbReference type="KEGG" id="lpn:lpg2303"/>
<dbReference type="PATRIC" id="fig|272624.6.peg.2417"/>
<dbReference type="eggNOG" id="COG0082">
    <property type="taxonomic scope" value="Bacteria"/>
</dbReference>
<dbReference type="HOGENOM" id="CLU_034547_0_2_6"/>
<dbReference type="OrthoDB" id="9771806at2"/>
<dbReference type="UniPathway" id="UPA00053">
    <property type="reaction ID" value="UER00090"/>
</dbReference>
<dbReference type="Proteomes" id="UP000000609">
    <property type="component" value="Chromosome"/>
</dbReference>
<dbReference type="GO" id="GO:0005829">
    <property type="term" value="C:cytosol"/>
    <property type="evidence" value="ECO:0007669"/>
    <property type="project" value="TreeGrafter"/>
</dbReference>
<dbReference type="GO" id="GO:0004107">
    <property type="term" value="F:chorismate synthase activity"/>
    <property type="evidence" value="ECO:0007669"/>
    <property type="project" value="UniProtKB-UniRule"/>
</dbReference>
<dbReference type="GO" id="GO:0010181">
    <property type="term" value="F:FMN binding"/>
    <property type="evidence" value="ECO:0007669"/>
    <property type="project" value="TreeGrafter"/>
</dbReference>
<dbReference type="GO" id="GO:0008652">
    <property type="term" value="P:amino acid biosynthetic process"/>
    <property type="evidence" value="ECO:0007669"/>
    <property type="project" value="UniProtKB-KW"/>
</dbReference>
<dbReference type="GO" id="GO:0009073">
    <property type="term" value="P:aromatic amino acid family biosynthetic process"/>
    <property type="evidence" value="ECO:0007669"/>
    <property type="project" value="UniProtKB-KW"/>
</dbReference>
<dbReference type="GO" id="GO:0009423">
    <property type="term" value="P:chorismate biosynthetic process"/>
    <property type="evidence" value="ECO:0007669"/>
    <property type="project" value="UniProtKB-UniRule"/>
</dbReference>
<dbReference type="CDD" id="cd07304">
    <property type="entry name" value="Chorismate_synthase"/>
    <property type="match status" value="1"/>
</dbReference>
<dbReference type="FunFam" id="3.60.150.10:FF:000001">
    <property type="entry name" value="Chorismate synthase"/>
    <property type="match status" value="1"/>
</dbReference>
<dbReference type="Gene3D" id="3.60.150.10">
    <property type="entry name" value="Chorismate synthase AroC"/>
    <property type="match status" value="1"/>
</dbReference>
<dbReference type="HAMAP" id="MF_00300">
    <property type="entry name" value="Chorismate_synth"/>
    <property type="match status" value="1"/>
</dbReference>
<dbReference type="InterPro" id="IPR000453">
    <property type="entry name" value="Chorismate_synth"/>
</dbReference>
<dbReference type="InterPro" id="IPR035904">
    <property type="entry name" value="Chorismate_synth_AroC_sf"/>
</dbReference>
<dbReference type="InterPro" id="IPR020541">
    <property type="entry name" value="Chorismate_synthase_CS"/>
</dbReference>
<dbReference type="NCBIfam" id="TIGR00033">
    <property type="entry name" value="aroC"/>
    <property type="match status" value="1"/>
</dbReference>
<dbReference type="NCBIfam" id="NF003793">
    <property type="entry name" value="PRK05382.1"/>
    <property type="match status" value="1"/>
</dbReference>
<dbReference type="PANTHER" id="PTHR21085">
    <property type="entry name" value="CHORISMATE SYNTHASE"/>
    <property type="match status" value="1"/>
</dbReference>
<dbReference type="PANTHER" id="PTHR21085:SF0">
    <property type="entry name" value="CHORISMATE SYNTHASE"/>
    <property type="match status" value="1"/>
</dbReference>
<dbReference type="Pfam" id="PF01264">
    <property type="entry name" value="Chorismate_synt"/>
    <property type="match status" value="1"/>
</dbReference>
<dbReference type="PIRSF" id="PIRSF001456">
    <property type="entry name" value="Chorismate_synth"/>
    <property type="match status" value="1"/>
</dbReference>
<dbReference type="SUPFAM" id="SSF103263">
    <property type="entry name" value="Chorismate synthase, AroC"/>
    <property type="match status" value="1"/>
</dbReference>
<dbReference type="PROSITE" id="PS00787">
    <property type="entry name" value="CHORISMATE_SYNTHASE_1"/>
    <property type="match status" value="1"/>
</dbReference>
<dbReference type="PROSITE" id="PS00788">
    <property type="entry name" value="CHORISMATE_SYNTHASE_2"/>
    <property type="match status" value="1"/>
</dbReference>
<dbReference type="PROSITE" id="PS00789">
    <property type="entry name" value="CHORISMATE_SYNTHASE_3"/>
    <property type="match status" value="1"/>
</dbReference>
<keyword id="KW-0028">Amino-acid biosynthesis</keyword>
<keyword id="KW-0057">Aromatic amino acid biosynthesis</keyword>
<keyword id="KW-0274">FAD</keyword>
<keyword id="KW-0285">Flavoprotein</keyword>
<keyword id="KW-0288">FMN</keyword>
<keyword id="KW-0456">Lyase</keyword>
<keyword id="KW-0521">NADP</keyword>
<keyword id="KW-1185">Reference proteome</keyword>
<proteinExistence type="inferred from homology"/>
<feature type="chain" id="PRO_0000140601" description="Chorismate synthase">
    <location>
        <begin position="1"/>
        <end position="352"/>
    </location>
</feature>
<feature type="binding site" evidence="1">
    <location>
        <position position="48"/>
    </location>
    <ligand>
        <name>NADP(+)</name>
        <dbReference type="ChEBI" id="CHEBI:58349"/>
    </ligand>
</feature>
<feature type="binding site" evidence="1">
    <location>
        <begin position="125"/>
        <end position="127"/>
    </location>
    <ligand>
        <name>FMN</name>
        <dbReference type="ChEBI" id="CHEBI:58210"/>
    </ligand>
</feature>
<feature type="binding site" evidence="1">
    <location>
        <begin position="238"/>
        <end position="239"/>
    </location>
    <ligand>
        <name>FMN</name>
        <dbReference type="ChEBI" id="CHEBI:58210"/>
    </ligand>
</feature>
<feature type="binding site" evidence="1">
    <location>
        <position position="278"/>
    </location>
    <ligand>
        <name>FMN</name>
        <dbReference type="ChEBI" id="CHEBI:58210"/>
    </ligand>
</feature>
<feature type="binding site" evidence="1">
    <location>
        <begin position="293"/>
        <end position="297"/>
    </location>
    <ligand>
        <name>FMN</name>
        <dbReference type="ChEBI" id="CHEBI:58210"/>
    </ligand>
</feature>
<feature type="binding site" evidence="1">
    <location>
        <position position="319"/>
    </location>
    <ligand>
        <name>FMN</name>
        <dbReference type="ChEBI" id="CHEBI:58210"/>
    </ligand>
</feature>
<sequence length="352" mass="38400">MSGNTFGALFTVTTFGESHGPAIGCVVDGCPPGMSLTEADIQPFLDKRKPGQSKYTTQRREEDKVQILSGVFDGKTTGAPIALLIQNTDQRSRDYEDIKNLFRPGHADFTYHYKYGHRDYRGGGRSSARETAARVAAGAIARLYLKRYLNLDIIGYLQQMGDLKLQFENENEINKNPFFCPNNKQIQELADYVDRLRRQGDSVGARVKILARGVPTGLGDPVFDKLDATLAYAMMSINAVKGVEIGAGFNAVEQLGSHHRDQMTAKGFLSNHAGGILGGIATGQPIEVSIALKPTSSITTPGQTINTEGEEVTVVTKGRHDPCVGIRAVPIAEAMMALVLMDHYLRHKAQCK</sequence>
<organism>
    <name type="scientific">Legionella pneumophila subsp. pneumophila (strain Philadelphia 1 / ATCC 33152 / DSM 7513)</name>
    <dbReference type="NCBI Taxonomy" id="272624"/>
    <lineage>
        <taxon>Bacteria</taxon>
        <taxon>Pseudomonadati</taxon>
        <taxon>Pseudomonadota</taxon>
        <taxon>Gammaproteobacteria</taxon>
        <taxon>Legionellales</taxon>
        <taxon>Legionellaceae</taxon>
        <taxon>Legionella</taxon>
    </lineage>
</organism>
<reference key="1">
    <citation type="journal article" date="2004" name="Science">
        <title>The genomic sequence of the accidental pathogen Legionella pneumophila.</title>
        <authorList>
            <person name="Chien M."/>
            <person name="Morozova I."/>
            <person name="Shi S."/>
            <person name="Sheng H."/>
            <person name="Chen J."/>
            <person name="Gomez S.M."/>
            <person name="Asamani G."/>
            <person name="Hill K."/>
            <person name="Nuara J."/>
            <person name="Feder M."/>
            <person name="Rineer J."/>
            <person name="Greenberg J.J."/>
            <person name="Steshenko V."/>
            <person name="Park S.H."/>
            <person name="Zhao B."/>
            <person name="Teplitskaya E."/>
            <person name="Edwards J.R."/>
            <person name="Pampou S."/>
            <person name="Georghiou A."/>
            <person name="Chou I.-C."/>
            <person name="Iannuccilli W."/>
            <person name="Ulz M.E."/>
            <person name="Kim D.H."/>
            <person name="Geringer-Sameth A."/>
            <person name="Goldsberry C."/>
            <person name="Morozov P."/>
            <person name="Fischer S.G."/>
            <person name="Segal G."/>
            <person name="Qu X."/>
            <person name="Rzhetsky A."/>
            <person name="Zhang P."/>
            <person name="Cayanis E."/>
            <person name="De Jong P.J."/>
            <person name="Ju J."/>
            <person name="Kalachikov S."/>
            <person name="Shuman H.A."/>
            <person name="Russo J.J."/>
        </authorList>
    </citation>
    <scope>NUCLEOTIDE SEQUENCE [LARGE SCALE GENOMIC DNA]</scope>
    <source>
        <strain>Philadelphia 1 / ATCC 33152 / DSM 7513</strain>
    </source>
</reference>
<name>AROC_LEGPH</name>
<evidence type="ECO:0000255" key="1">
    <source>
        <dbReference type="HAMAP-Rule" id="MF_00300"/>
    </source>
</evidence>
<accession>Q5ZT62</accession>